<proteinExistence type="inferred from homology"/>
<dbReference type="EC" id="3.6.4.-" evidence="1"/>
<dbReference type="EMBL" id="CP000251">
    <property type="protein sequence ID" value="ABC80728.1"/>
    <property type="molecule type" value="Genomic_DNA"/>
</dbReference>
<dbReference type="RefSeq" id="WP_011420011.1">
    <property type="nucleotide sequence ID" value="NC_007760.1"/>
</dbReference>
<dbReference type="SMR" id="Q2IPJ5"/>
<dbReference type="STRING" id="290397.Adeh_0953"/>
<dbReference type="KEGG" id="ade:Adeh_0953"/>
<dbReference type="eggNOG" id="COG2255">
    <property type="taxonomic scope" value="Bacteria"/>
</dbReference>
<dbReference type="HOGENOM" id="CLU_055599_1_0_7"/>
<dbReference type="OrthoDB" id="9804478at2"/>
<dbReference type="Proteomes" id="UP000001935">
    <property type="component" value="Chromosome"/>
</dbReference>
<dbReference type="GO" id="GO:0005737">
    <property type="term" value="C:cytoplasm"/>
    <property type="evidence" value="ECO:0007669"/>
    <property type="project" value="UniProtKB-SubCell"/>
</dbReference>
<dbReference type="GO" id="GO:0048476">
    <property type="term" value="C:Holliday junction resolvase complex"/>
    <property type="evidence" value="ECO:0007669"/>
    <property type="project" value="UniProtKB-UniRule"/>
</dbReference>
<dbReference type="GO" id="GO:0005524">
    <property type="term" value="F:ATP binding"/>
    <property type="evidence" value="ECO:0007669"/>
    <property type="project" value="UniProtKB-UniRule"/>
</dbReference>
<dbReference type="GO" id="GO:0016887">
    <property type="term" value="F:ATP hydrolysis activity"/>
    <property type="evidence" value="ECO:0007669"/>
    <property type="project" value="InterPro"/>
</dbReference>
<dbReference type="GO" id="GO:0000400">
    <property type="term" value="F:four-way junction DNA binding"/>
    <property type="evidence" value="ECO:0007669"/>
    <property type="project" value="UniProtKB-UniRule"/>
</dbReference>
<dbReference type="GO" id="GO:0009378">
    <property type="term" value="F:four-way junction helicase activity"/>
    <property type="evidence" value="ECO:0007669"/>
    <property type="project" value="InterPro"/>
</dbReference>
<dbReference type="GO" id="GO:0006310">
    <property type="term" value="P:DNA recombination"/>
    <property type="evidence" value="ECO:0007669"/>
    <property type="project" value="UniProtKB-UniRule"/>
</dbReference>
<dbReference type="GO" id="GO:0006281">
    <property type="term" value="P:DNA repair"/>
    <property type="evidence" value="ECO:0007669"/>
    <property type="project" value="UniProtKB-UniRule"/>
</dbReference>
<dbReference type="CDD" id="cd00009">
    <property type="entry name" value="AAA"/>
    <property type="match status" value="1"/>
</dbReference>
<dbReference type="Gene3D" id="1.10.8.60">
    <property type="match status" value="1"/>
</dbReference>
<dbReference type="Gene3D" id="3.40.50.300">
    <property type="entry name" value="P-loop containing nucleotide triphosphate hydrolases"/>
    <property type="match status" value="1"/>
</dbReference>
<dbReference type="Gene3D" id="1.10.10.10">
    <property type="entry name" value="Winged helix-like DNA-binding domain superfamily/Winged helix DNA-binding domain"/>
    <property type="match status" value="1"/>
</dbReference>
<dbReference type="HAMAP" id="MF_00016">
    <property type="entry name" value="DNA_HJ_migration_RuvB"/>
    <property type="match status" value="1"/>
</dbReference>
<dbReference type="InterPro" id="IPR003593">
    <property type="entry name" value="AAA+_ATPase"/>
</dbReference>
<dbReference type="InterPro" id="IPR041445">
    <property type="entry name" value="AAA_lid_4"/>
</dbReference>
<dbReference type="InterPro" id="IPR000641">
    <property type="entry name" value="CbxX/CfxQ"/>
</dbReference>
<dbReference type="InterPro" id="IPR004605">
    <property type="entry name" value="DNA_helicase_Holl-junc_RuvB"/>
</dbReference>
<dbReference type="InterPro" id="IPR027417">
    <property type="entry name" value="P-loop_NTPase"/>
</dbReference>
<dbReference type="InterPro" id="IPR008824">
    <property type="entry name" value="RuvB-like_N"/>
</dbReference>
<dbReference type="InterPro" id="IPR008823">
    <property type="entry name" value="RuvB_C"/>
</dbReference>
<dbReference type="InterPro" id="IPR036388">
    <property type="entry name" value="WH-like_DNA-bd_sf"/>
</dbReference>
<dbReference type="InterPro" id="IPR036390">
    <property type="entry name" value="WH_DNA-bd_sf"/>
</dbReference>
<dbReference type="NCBIfam" id="NF000868">
    <property type="entry name" value="PRK00080.1"/>
    <property type="match status" value="1"/>
</dbReference>
<dbReference type="NCBIfam" id="TIGR00635">
    <property type="entry name" value="ruvB"/>
    <property type="match status" value="1"/>
</dbReference>
<dbReference type="PANTHER" id="PTHR42848">
    <property type="match status" value="1"/>
</dbReference>
<dbReference type="PANTHER" id="PTHR42848:SF1">
    <property type="entry name" value="HOLLIDAY JUNCTION BRANCH MIGRATION COMPLEX SUBUNIT RUVB"/>
    <property type="match status" value="1"/>
</dbReference>
<dbReference type="Pfam" id="PF17864">
    <property type="entry name" value="AAA_lid_4"/>
    <property type="match status" value="1"/>
</dbReference>
<dbReference type="Pfam" id="PF05491">
    <property type="entry name" value="RuvB_C"/>
    <property type="match status" value="1"/>
</dbReference>
<dbReference type="Pfam" id="PF05496">
    <property type="entry name" value="RuvB_N"/>
    <property type="match status" value="1"/>
</dbReference>
<dbReference type="PRINTS" id="PR00819">
    <property type="entry name" value="CBXCFQXSUPER"/>
</dbReference>
<dbReference type="SMART" id="SM00382">
    <property type="entry name" value="AAA"/>
    <property type="match status" value="1"/>
</dbReference>
<dbReference type="SUPFAM" id="SSF52540">
    <property type="entry name" value="P-loop containing nucleoside triphosphate hydrolases"/>
    <property type="match status" value="1"/>
</dbReference>
<dbReference type="SUPFAM" id="SSF46785">
    <property type="entry name" value="Winged helix' DNA-binding domain"/>
    <property type="match status" value="1"/>
</dbReference>
<comment type="function">
    <text evidence="1">The RuvA-RuvB-RuvC complex processes Holliday junction (HJ) DNA during genetic recombination and DNA repair, while the RuvA-RuvB complex plays an important role in the rescue of blocked DNA replication forks via replication fork reversal (RFR). RuvA specifically binds to HJ cruciform DNA, conferring on it an open structure. The RuvB hexamer acts as an ATP-dependent pump, pulling dsDNA into and through the RuvAB complex. RuvB forms 2 homohexamers on either side of HJ DNA bound by 1 or 2 RuvA tetramers; 4 subunits per hexamer contact DNA at a time. Coordinated motions by a converter formed by DNA-disengaged RuvB subunits stimulates ATP hydrolysis and nucleotide exchange. Immobilization of the converter enables RuvB to convert the ATP-contained energy into a lever motion, pulling 2 nucleotides of DNA out of the RuvA tetramer per ATP hydrolyzed, thus driving DNA branch migration. The RuvB motors rotate together with the DNA substrate, which together with the progressing nucleotide cycle form the mechanistic basis for DNA recombination by continuous HJ branch migration. Branch migration allows RuvC to scan DNA until it finds its consensus sequence, where it cleaves and resolves cruciform DNA.</text>
</comment>
<comment type="catalytic activity">
    <reaction evidence="1">
        <text>ATP + H2O = ADP + phosphate + H(+)</text>
        <dbReference type="Rhea" id="RHEA:13065"/>
        <dbReference type="ChEBI" id="CHEBI:15377"/>
        <dbReference type="ChEBI" id="CHEBI:15378"/>
        <dbReference type="ChEBI" id="CHEBI:30616"/>
        <dbReference type="ChEBI" id="CHEBI:43474"/>
        <dbReference type="ChEBI" id="CHEBI:456216"/>
    </reaction>
</comment>
<comment type="subunit">
    <text evidence="1">Homohexamer. Forms an RuvA(8)-RuvB(12)-Holliday junction (HJ) complex. HJ DNA is sandwiched between 2 RuvA tetramers; dsDNA enters through RuvA and exits via RuvB. An RuvB hexamer assembles on each DNA strand where it exits the tetramer. Each RuvB hexamer is contacted by two RuvA subunits (via domain III) on 2 adjacent RuvB subunits; this complex drives branch migration. In the full resolvosome a probable DNA-RuvA(4)-RuvB(12)-RuvC(2) complex forms which resolves the HJ.</text>
</comment>
<comment type="subcellular location">
    <subcellularLocation>
        <location evidence="1">Cytoplasm</location>
    </subcellularLocation>
</comment>
<comment type="domain">
    <text evidence="1">Has 3 domains, the large (RuvB-L) and small ATPase (RuvB-S) domains and the C-terminal head (RuvB-H) domain. The head domain binds DNA, while the ATPase domains jointly bind ATP, ADP or are empty depending on the state of the subunit in the translocation cycle. During a single DNA translocation step the structure of each domain remains the same, but their relative positions change.</text>
</comment>
<comment type="similarity">
    <text evidence="1">Belongs to the RuvB family.</text>
</comment>
<sequence length="342" mass="37182">MTVKPLRDVTPKPLEGEERLEQSLRPATFDDYVGQVKIVDNVKVYAAAARQRGESLDHVLLSGPPGLGKTSLAHILARELGVTLHVTSGPALVKKGDLAGLLTALAPRDILFIDEIHRLSPAVEEALYPAMEDYRFDVVLGAGLGAQTMEMKLERFTLVGATTRTGLLASPLRDRFPIQERLEYYGPAELKEIAVRAARKLGLPVDEDGAEELARRARGTPRIAIRLLQRARDFAQVEGDGRLTREVVDRTLRRLEVDARGLDAMDRRILAAVIDTFGGGPVGIDAVAAAVGEESGTLEDVYEPFLVREGYLARTPRGRVALPAAYAHLGRDRSGGKQGSLV</sequence>
<gene>
    <name evidence="1" type="primary">ruvB</name>
    <name type="ordered locus">Adeh_0953</name>
</gene>
<organism>
    <name type="scientific">Anaeromyxobacter dehalogenans (strain 2CP-C)</name>
    <dbReference type="NCBI Taxonomy" id="290397"/>
    <lineage>
        <taxon>Bacteria</taxon>
        <taxon>Pseudomonadati</taxon>
        <taxon>Myxococcota</taxon>
        <taxon>Myxococcia</taxon>
        <taxon>Myxococcales</taxon>
        <taxon>Cystobacterineae</taxon>
        <taxon>Anaeromyxobacteraceae</taxon>
        <taxon>Anaeromyxobacter</taxon>
    </lineage>
</organism>
<reference key="1">
    <citation type="submission" date="2006-01" db="EMBL/GenBank/DDBJ databases">
        <title>Complete sequence of Anaeromyxobacter dehalogenans 2CP-C.</title>
        <authorList>
            <person name="Copeland A."/>
            <person name="Lucas S."/>
            <person name="Lapidus A."/>
            <person name="Barry K."/>
            <person name="Detter J.C."/>
            <person name="Glavina T."/>
            <person name="Hammon N."/>
            <person name="Israni S."/>
            <person name="Pitluck S."/>
            <person name="Brettin T."/>
            <person name="Bruce D."/>
            <person name="Han C."/>
            <person name="Tapia R."/>
            <person name="Gilna P."/>
            <person name="Kiss H."/>
            <person name="Schmutz J."/>
            <person name="Larimer F."/>
            <person name="Land M."/>
            <person name="Kyrpides N."/>
            <person name="Anderson I."/>
            <person name="Sanford R.A."/>
            <person name="Ritalahti K.M."/>
            <person name="Thomas H.S."/>
            <person name="Kirby J.R."/>
            <person name="Zhulin I.B."/>
            <person name="Loeffler F.E."/>
            <person name="Richardson P."/>
        </authorList>
    </citation>
    <scope>NUCLEOTIDE SEQUENCE [LARGE SCALE GENOMIC DNA]</scope>
    <source>
        <strain>2CP-C</strain>
    </source>
</reference>
<feature type="chain" id="PRO_0000235346" description="Holliday junction branch migration complex subunit RuvB">
    <location>
        <begin position="1"/>
        <end position="342"/>
    </location>
</feature>
<feature type="region of interest" description="Large ATPase domain (RuvB-L)" evidence="1">
    <location>
        <begin position="1"/>
        <end position="185"/>
    </location>
</feature>
<feature type="region of interest" description="Small ATPAse domain (RuvB-S)" evidence="1">
    <location>
        <begin position="186"/>
        <end position="256"/>
    </location>
</feature>
<feature type="region of interest" description="Head domain (RuvB-H)" evidence="1">
    <location>
        <begin position="259"/>
        <end position="342"/>
    </location>
</feature>
<feature type="binding site" evidence="1">
    <location>
        <position position="24"/>
    </location>
    <ligand>
        <name>ATP</name>
        <dbReference type="ChEBI" id="CHEBI:30616"/>
    </ligand>
</feature>
<feature type="binding site" evidence="1">
    <location>
        <position position="25"/>
    </location>
    <ligand>
        <name>ATP</name>
        <dbReference type="ChEBI" id="CHEBI:30616"/>
    </ligand>
</feature>
<feature type="binding site" evidence="1">
    <location>
        <position position="66"/>
    </location>
    <ligand>
        <name>ATP</name>
        <dbReference type="ChEBI" id="CHEBI:30616"/>
    </ligand>
</feature>
<feature type="binding site" evidence="1">
    <location>
        <position position="69"/>
    </location>
    <ligand>
        <name>ATP</name>
        <dbReference type="ChEBI" id="CHEBI:30616"/>
    </ligand>
</feature>
<feature type="binding site" evidence="1">
    <location>
        <position position="70"/>
    </location>
    <ligand>
        <name>ATP</name>
        <dbReference type="ChEBI" id="CHEBI:30616"/>
    </ligand>
</feature>
<feature type="binding site" evidence="1">
    <location>
        <position position="70"/>
    </location>
    <ligand>
        <name>Mg(2+)</name>
        <dbReference type="ChEBI" id="CHEBI:18420"/>
    </ligand>
</feature>
<feature type="binding site" evidence="1">
    <location>
        <position position="71"/>
    </location>
    <ligand>
        <name>ATP</name>
        <dbReference type="ChEBI" id="CHEBI:30616"/>
    </ligand>
</feature>
<feature type="binding site" evidence="1">
    <location>
        <begin position="132"/>
        <end position="134"/>
    </location>
    <ligand>
        <name>ATP</name>
        <dbReference type="ChEBI" id="CHEBI:30616"/>
    </ligand>
</feature>
<feature type="binding site" evidence="1">
    <location>
        <position position="175"/>
    </location>
    <ligand>
        <name>ATP</name>
        <dbReference type="ChEBI" id="CHEBI:30616"/>
    </ligand>
</feature>
<feature type="binding site" evidence="1">
    <location>
        <position position="185"/>
    </location>
    <ligand>
        <name>ATP</name>
        <dbReference type="ChEBI" id="CHEBI:30616"/>
    </ligand>
</feature>
<feature type="binding site" evidence="1">
    <location>
        <position position="222"/>
    </location>
    <ligand>
        <name>ATP</name>
        <dbReference type="ChEBI" id="CHEBI:30616"/>
    </ligand>
</feature>
<feature type="binding site" evidence="1">
    <location>
        <position position="314"/>
    </location>
    <ligand>
        <name>DNA</name>
        <dbReference type="ChEBI" id="CHEBI:16991"/>
    </ligand>
</feature>
<feature type="binding site" evidence="1">
    <location>
        <position position="319"/>
    </location>
    <ligand>
        <name>DNA</name>
        <dbReference type="ChEBI" id="CHEBI:16991"/>
    </ligand>
</feature>
<evidence type="ECO:0000255" key="1">
    <source>
        <dbReference type="HAMAP-Rule" id="MF_00016"/>
    </source>
</evidence>
<name>RUVB_ANADE</name>
<protein>
    <recommendedName>
        <fullName evidence="1">Holliday junction branch migration complex subunit RuvB</fullName>
        <ecNumber evidence="1">3.6.4.-</ecNumber>
    </recommendedName>
</protein>
<accession>Q2IPJ5</accession>
<keyword id="KW-0067">ATP-binding</keyword>
<keyword id="KW-0963">Cytoplasm</keyword>
<keyword id="KW-0227">DNA damage</keyword>
<keyword id="KW-0233">DNA recombination</keyword>
<keyword id="KW-0234">DNA repair</keyword>
<keyword id="KW-0238">DNA-binding</keyword>
<keyword id="KW-0378">Hydrolase</keyword>
<keyword id="KW-0547">Nucleotide-binding</keyword>
<keyword id="KW-1185">Reference proteome</keyword>